<gene>
    <name evidence="2" type="primary">atpB</name>
    <name type="ordered locus">MK1673</name>
</gene>
<keyword id="KW-0066">ATP synthesis</keyword>
<keyword id="KW-0068">Autocatalytic cleavage</keyword>
<keyword id="KW-1003">Cell membrane</keyword>
<keyword id="KW-0238">DNA-binding</keyword>
<keyword id="KW-0255">Endonuclease</keyword>
<keyword id="KW-0375">Hydrogen ion transport</keyword>
<keyword id="KW-0378">Hydrolase</keyword>
<keyword id="KW-0404">Intron homing</keyword>
<keyword id="KW-0406">Ion transport</keyword>
<keyword id="KW-0472">Membrane</keyword>
<keyword id="KW-0540">Nuclease</keyword>
<keyword id="KW-0651">Protein splicing</keyword>
<keyword id="KW-1185">Reference proteome</keyword>
<keyword id="KW-0813">Transport</keyword>
<accession>Q8TUT0</accession>
<comment type="function">
    <text evidence="2">Component of the A-type ATP synthase that produces ATP from ADP in the presence of a proton gradient across the membrane. The B chain is a regulatory subunit.</text>
</comment>
<comment type="subunit">
    <text evidence="2">Has multiple subunits with at least A(3), B(3), C, D, E, F, H, I and proteolipid K(x).</text>
</comment>
<comment type="subcellular location">
    <subcellularLocation>
        <location evidence="2">Cell membrane</location>
        <topology evidence="2">Peripheral membrane protein</topology>
    </subcellularLocation>
</comment>
<comment type="PTM">
    <text evidence="3">This protein undergoes a protein self splicing that involves a post-translational excision of the VDE intervening region (intein) followed by peptide ligation.</text>
</comment>
<comment type="similarity">
    <text evidence="2">Belongs to the ATPase alpha/beta chains family.</text>
</comment>
<organism>
    <name type="scientific">Methanopyrus kandleri (strain AV19 / DSM 6324 / JCM 9639 / NBRC 100938)</name>
    <dbReference type="NCBI Taxonomy" id="190192"/>
    <lineage>
        <taxon>Archaea</taxon>
        <taxon>Methanobacteriati</taxon>
        <taxon>Methanobacteriota</taxon>
        <taxon>Methanomada group</taxon>
        <taxon>Methanopyri</taxon>
        <taxon>Methanopyrales</taxon>
        <taxon>Methanopyraceae</taxon>
        <taxon>Methanopyrus</taxon>
    </lineage>
</organism>
<evidence type="ECO:0000255" key="1"/>
<evidence type="ECO:0000255" key="2">
    <source>
        <dbReference type="HAMAP-Rule" id="MF_00310"/>
    </source>
</evidence>
<evidence type="ECO:0000305" key="3"/>
<name>AATB_METKA</name>
<proteinExistence type="inferred from homology"/>
<dbReference type="EMBL" id="AE009439">
    <property type="protein sequence ID" value="AAM02886.1"/>
    <property type="molecule type" value="Genomic_DNA"/>
</dbReference>
<dbReference type="RefSeq" id="WP_011020041.1">
    <property type="nucleotide sequence ID" value="NC_003551.1"/>
</dbReference>
<dbReference type="FunCoup" id="Q8TUT0">
    <property type="interactions" value="33"/>
</dbReference>
<dbReference type="STRING" id="190192.MK1673"/>
<dbReference type="PaxDb" id="190192-MK1673"/>
<dbReference type="EnsemblBacteria" id="AAM02886">
    <property type="protein sequence ID" value="AAM02886"/>
    <property type="gene ID" value="MK1673"/>
</dbReference>
<dbReference type="GeneID" id="1478268"/>
<dbReference type="KEGG" id="mka:MK1673"/>
<dbReference type="PATRIC" id="fig|190192.8.peg.1837"/>
<dbReference type="HOGENOM" id="CLU_301612_0_0_2"/>
<dbReference type="InParanoid" id="Q8TUT0"/>
<dbReference type="OrthoDB" id="32941at2157"/>
<dbReference type="Proteomes" id="UP000001826">
    <property type="component" value="Chromosome"/>
</dbReference>
<dbReference type="GO" id="GO:0005886">
    <property type="term" value="C:plasma membrane"/>
    <property type="evidence" value="ECO:0007669"/>
    <property type="project" value="UniProtKB-SubCell"/>
</dbReference>
<dbReference type="GO" id="GO:0005524">
    <property type="term" value="F:ATP binding"/>
    <property type="evidence" value="ECO:0007669"/>
    <property type="project" value="UniProtKB-UniRule"/>
</dbReference>
<dbReference type="GO" id="GO:0003677">
    <property type="term" value="F:DNA binding"/>
    <property type="evidence" value="ECO:0007669"/>
    <property type="project" value="UniProtKB-KW"/>
</dbReference>
<dbReference type="GO" id="GO:0004519">
    <property type="term" value="F:endonuclease activity"/>
    <property type="evidence" value="ECO:0007669"/>
    <property type="project" value="UniProtKB-KW"/>
</dbReference>
<dbReference type="GO" id="GO:0046933">
    <property type="term" value="F:proton-transporting ATP synthase activity, rotational mechanism"/>
    <property type="evidence" value="ECO:0007669"/>
    <property type="project" value="UniProtKB-UniRule"/>
</dbReference>
<dbReference type="GO" id="GO:0016539">
    <property type="term" value="P:intein-mediated protein splicing"/>
    <property type="evidence" value="ECO:0007669"/>
    <property type="project" value="InterPro"/>
</dbReference>
<dbReference type="GO" id="GO:0006314">
    <property type="term" value="P:intron homing"/>
    <property type="evidence" value="ECO:0007669"/>
    <property type="project" value="UniProtKB-KW"/>
</dbReference>
<dbReference type="GO" id="GO:0042777">
    <property type="term" value="P:proton motive force-driven plasma membrane ATP synthesis"/>
    <property type="evidence" value="ECO:0007669"/>
    <property type="project" value="UniProtKB-UniRule"/>
</dbReference>
<dbReference type="CDD" id="cd18112">
    <property type="entry name" value="ATP-synt_V_A-type_beta_C"/>
    <property type="match status" value="1"/>
</dbReference>
<dbReference type="CDD" id="cd18118">
    <property type="entry name" value="ATP-synt_V_A-type_beta_N"/>
    <property type="match status" value="1"/>
</dbReference>
<dbReference type="CDD" id="cd00081">
    <property type="entry name" value="Hint"/>
    <property type="match status" value="1"/>
</dbReference>
<dbReference type="CDD" id="cd00093">
    <property type="entry name" value="HTH_XRE"/>
    <property type="match status" value="1"/>
</dbReference>
<dbReference type="CDD" id="cd01135">
    <property type="entry name" value="V_A-ATPase_B"/>
    <property type="match status" value="1"/>
</dbReference>
<dbReference type="Gene3D" id="3.40.50.12240">
    <property type="match status" value="2"/>
</dbReference>
<dbReference type="Gene3D" id="2.170.16.10">
    <property type="entry name" value="Hedgehog/Intein (Hint) domain"/>
    <property type="match status" value="1"/>
</dbReference>
<dbReference type="Gene3D" id="3.10.28.10">
    <property type="entry name" value="Homing endonucleases"/>
    <property type="match status" value="1"/>
</dbReference>
<dbReference type="HAMAP" id="MF_00310">
    <property type="entry name" value="ATP_synth_B_arch"/>
    <property type="match status" value="1"/>
</dbReference>
<dbReference type="InterPro" id="IPR055190">
    <property type="entry name" value="ATP-synt_VA_C"/>
</dbReference>
<dbReference type="InterPro" id="IPR020003">
    <property type="entry name" value="ATPase_a/bsu_AS"/>
</dbReference>
<dbReference type="InterPro" id="IPR004100">
    <property type="entry name" value="ATPase_F1/V1/A1_a/bsu_N"/>
</dbReference>
<dbReference type="InterPro" id="IPR000194">
    <property type="entry name" value="ATPase_F1/V1/A1_a/bsu_nucl-bd"/>
</dbReference>
<dbReference type="InterPro" id="IPR001387">
    <property type="entry name" value="Cro/C1-type_HTH"/>
</dbReference>
<dbReference type="InterPro" id="IPR003586">
    <property type="entry name" value="Hint_dom_C"/>
</dbReference>
<dbReference type="InterPro" id="IPR003587">
    <property type="entry name" value="Hint_dom_N"/>
</dbReference>
<dbReference type="InterPro" id="IPR036844">
    <property type="entry name" value="Hint_dom_sf"/>
</dbReference>
<dbReference type="InterPro" id="IPR027434">
    <property type="entry name" value="Homing_endonucl"/>
</dbReference>
<dbReference type="InterPro" id="IPR006142">
    <property type="entry name" value="INTEIN"/>
</dbReference>
<dbReference type="InterPro" id="IPR030934">
    <property type="entry name" value="Intein_C"/>
</dbReference>
<dbReference type="InterPro" id="IPR004042">
    <property type="entry name" value="Intein_endonuc_central"/>
</dbReference>
<dbReference type="InterPro" id="IPR006141">
    <property type="entry name" value="Intein_N"/>
</dbReference>
<dbReference type="InterPro" id="IPR004860">
    <property type="entry name" value="LAGLIDADG_dom"/>
</dbReference>
<dbReference type="InterPro" id="IPR027417">
    <property type="entry name" value="P-loop_NTPase"/>
</dbReference>
<dbReference type="InterPro" id="IPR022879">
    <property type="entry name" value="V-ATPase_su_B/beta"/>
</dbReference>
<dbReference type="NCBIfam" id="TIGR01443">
    <property type="entry name" value="intein_Cterm"/>
    <property type="match status" value="1"/>
</dbReference>
<dbReference type="NCBIfam" id="TIGR01445">
    <property type="entry name" value="intein_Nterm"/>
    <property type="match status" value="1"/>
</dbReference>
<dbReference type="NCBIfam" id="NF003235">
    <property type="entry name" value="PRK04196.1"/>
    <property type="match status" value="2"/>
</dbReference>
<dbReference type="PANTHER" id="PTHR43389">
    <property type="entry name" value="V-TYPE PROTON ATPASE SUBUNIT B"/>
    <property type="match status" value="1"/>
</dbReference>
<dbReference type="PANTHER" id="PTHR43389:SF4">
    <property type="entry name" value="V-TYPE PROTON ATPASE SUBUNIT B"/>
    <property type="match status" value="1"/>
</dbReference>
<dbReference type="Pfam" id="PF00006">
    <property type="entry name" value="ATP-synt_ab"/>
    <property type="match status" value="2"/>
</dbReference>
<dbReference type="Pfam" id="PF02874">
    <property type="entry name" value="ATP-synt_ab_N"/>
    <property type="match status" value="1"/>
</dbReference>
<dbReference type="Pfam" id="PF22919">
    <property type="entry name" value="ATP-synt_VA_C"/>
    <property type="match status" value="1"/>
</dbReference>
<dbReference type="Pfam" id="PF14890">
    <property type="entry name" value="Intein_splicing"/>
    <property type="match status" value="1"/>
</dbReference>
<dbReference type="Pfam" id="PF14528">
    <property type="entry name" value="LAGLIDADG_3"/>
    <property type="match status" value="2"/>
</dbReference>
<dbReference type="PRINTS" id="PR00379">
    <property type="entry name" value="INTEIN"/>
</dbReference>
<dbReference type="SMART" id="SM00305">
    <property type="entry name" value="HintC"/>
    <property type="match status" value="1"/>
</dbReference>
<dbReference type="SMART" id="SM00306">
    <property type="entry name" value="HintN"/>
    <property type="match status" value="1"/>
</dbReference>
<dbReference type="SUPFAM" id="SSF47917">
    <property type="entry name" value="C-terminal domain of alpha and beta subunits of F1 ATP synthase"/>
    <property type="match status" value="1"/>
</dbReference>
<dbReference type="SUPFAM" id="SSF51294">
    <property type="entry name" value="Hedgehog/intein (Hint) domain"/>
    <property type="match status" value="1"/>
</dbReference>
<dbReference type="SUPFAM" id="SSF55608">
    <property type="entry name" value="Homing endonucleases"/>
    <property type="match status" value="2"/>
</dbReference>
<dbReference type="SUPFAM" id="SSF52540">
    <property type="entry name" value="P-loop containing nucleoside triphosphate hydrolases"/>
    <property type="match status" value="2"/>
</dbReference>
<dbReference type="PROSITE" id="PS00152">
    <property type="entry name" value="ATPASE_ALPHA_BETA"/>
    <property type="match status" value="1"/>
</dbReference>
<dbReference type="PROSITE" id="PS50818">
    <property type="entry name" value="INTEIN_C_TER"/>
    <property type="match status" value="1"/>
</dbReference>
<dbReference type="PROSITE" id="PS50819">
    <property type="entry name" value="INTEIN_ENDONUCLEASE"/>
    <property type="match status" value="1"/>
</dbReference>
<dbReference type="PROSITE" id="PS50817">
    <property type="entry name" value="INTEIN_N_TER"/>
    <property type="match status" value="1"/>
</dbReference>
<feature type="chain" id="PRO_0000002476" description="A-type ATP synthase subunit B, 1st part" evidence="1">
    <location>
        <begin position="1"/>
        <end position="260"/>
    </location>
</feature>
<feature type="chain" id="PRO_0000002477" description="Mka AtpB intein" evidence="1">
    <location>
        <begin position="261"/>
        <end position="777"/>
    </location>
</feature>
<feature type="chain" id="PRO_0000002478" description="A-type ATP synthase subunit B, 2nd part" evidence="1">
    <location>
        <begin position="778"/>
        <end position="990"/>
    </location>
</feature>
<feature type="domain" description="DOD-type homing endonuclease">
    <location>
        <begin position="491"/>
        <end position="614"/>
    </location>
</feature>
<reference key="1">
    <citation type="journal article" date="2002" name="Proc. Natl. Acad. Sci. U.S.A.">
        <title>The complete genome of hyperthermophile Methanopyrus kandleri AV19 and monophyly of archaeal methanogens.</title>
        <authorList>
            <person name="Slesarev A.I."/>
            <person name="Mezhevaya K.V."/>
            <person name="Makarova K.S."/>
            <person name="Polushin N.N."/>
            <person name="Shcherbinina O.V."/>
            <person name="Shakhova V.V."/>
            <person name="Belova G.I."/>
            <person name="Aravind L."/>
            <person name="Natale D.A."/>
            <person name="Rogozin I.B."/>
            <person name="Tatusov R.L."/>
            <person name="Wolf Y.I."/>
            <person name="Stetter K.O."/>
            <person name="Malykh A.G."/>
            <person name="Koonin E.V."/>
            <person name="Kozyavkin S.A."/>
        </authorList>
    </citation>
    <scope>NUCLEOTIDE SEQUENCE [LARGE SCALE GENOMIC DNA]</scope>
    <source>
        <strain>AV19 / DSM 6324 / JCM 9639 / NBRC 100938</strain>
    </source>
</reference>
<protein>
    <recommendedName>
        <fullName evidence="2">A-type ATP synthase subunit B</fullName>
    </recommendedName>
    <component>
        <recommendedName>
            <fullName>Mka AtpB intein</fullName>
        </recommendedName>
    </component>
</protein>
<sequence length="990" mass="110354">MAEAERPAGKEYTTISEVSGPLMVVEGVEGAKYGEVVEVETPTGEVRRGQVLEARRDAAVVQVFEGTSGLDTTSTKVRFTGETLRIPVSTDLLGRILNGRGEPIDGGPEIVPEDELDIHGAPINPAARKYPSDFIQTGISAIDGMNTLVRGQKLPIFSGSGLPHNELAAQIARQATVPGEEEEFAVVFAAMGITHEEAAFFRREFEETGALDRAVLILNLADDPSMERIITPRIALTVAEYLAFENDMHVLVILTDMTNYCFAPGTRVITASGDVVEIDEIVERAAETAVDGGLREGSTEVTVGVTNVRTLAAWDGDLTSNDVVAVEKIEAPSRAVRVRTRSGAELVVSEDHKFLVDTEDGPRMVEASELKSGDELYSVRELRVSEKVPTYLELLLEAEDKFYVHPTEEFEEAVAERYGSLAEACREKELPYRAREAKERRYYELSEFARLATAVIESVDEATEYIDYVTAGGRKRVKFSSPRPGKEVMYVAGLIASDGSVDTERGFVMFSNTERELLSAFEEIVTEEFGVDASKTENQNGVTMLRVNSRVLARVFERLADPKTVLKMPRELVAAYLAGYVDGDGHLKDGKIVITTADRERAGDLQLLLKRLGVPSVLRERDGAYDVVVTGHDAAELAEELPLRHPKKAEAAASMSSGRRSSRFDRVSRRFGRLLREVRRKYGVRASDLGSSSTISQIESGERRATRRLALEIVERLEEVVGDVEEVRELRELAEGNYVLDEVVEVETVEYEHEYLYDVTVVPDHTLVVENGIITSNCEALREISAAREEVPGRRGYPGYMYTDLATIYERAGCIRGRKGSITQMPILTMPHDDITHPIPDLTGYITEGQIVLSRDLHRRGIYPPIDVLPSLSRLMDEGIGKGKTREDHPDLSNQLYAAYAEGRDLRDLVAVVGEEALTERDRKFLKFADEFEQRFVKQGRDENRSIEETLDLGWELLAILPERELKRVSDELIEKYHPKYRQKKEEQEE</sequence>